<feature type="chain" id="PRO_1000147546" description="Ribosomal RNA large subunit methyltransferase H">
    <location>
        <begin position="1"/>
        <end position="155"/>
    </location>
</feature>
<feature type="binding site" evidence="1">
    <location>
        <position position="72"/>
    </location>
    <ligand>
        <name>S-adenosyl-L-methionine</name>
        <dbReference type="ChEBI" id="CHEBI:59789"/>
    </ligand>
</feature>
<feature type="binding site" evidence="1">
    <location>
        <position position="103"/>
    </location>
    <ligand>
        <name>S-adenosyl-L-methionine</name>
        <dbReference type="ChEBI" id="CHEBI:59789"/>
    </ligand>
</feature>
<feature type="binding site" evidence="1">
    <location>
        <begin position="122"/>
        <end position="127"/>
    </location>
    <ligand>
        <name>S-adenosyl-L-methionine</name>
        <dbReference type="ChEBI" id="CHEBI:59789"/>
    </ligand>
</feature>
<keyword id="KW-0963">Cytoplasm</keyword>
<keyword id="KW-0489">Methyltransferase</keyword>
<keyword id="KW-1185">Reference proteome</keyword>
<keyword id="KW-0698">rRNA processing</keyword>
<keyword id="KW-0949">S-adenosyl-L-methionine</keyword>
<keyword id="KW-0808">Transferase</keyword>
<comment type="function">
    <text evidence="1">Specifically methylates the pseudouridine at position 1915 (m3Psi1915) in 23S rRNA.</text>
</comment>
<comment type="catalytic activity">
    <reaction evidence="1">
        <text>pseudouridine(1915) in 23S rRNA + S-adenosyl-L-methionine = N(3)-methylpseudouridine(1915) in 23S rRNA + S-adenosyl-L-homocysteine + H(+)</text>
        <dbReference type="Rhea" id="RHEA:42752"/>
        <dbReference type="Rhea" id="RHEA-COMP:10221"/>
        <dbReference type="Rhea" id="RHEA-COMP:10222"/>
        <dbReference type="ChEBI" id="CHEBI:15378"/>
        <dbReference type="ChEBI" id="CHEBI:57856"/>
        <dbReference type="ChEBI" id="CHEBI:59789"/>
        <dbReference type="ChEBI" id="CHEBI:65314"/>
        <dbReference type="ChEBI" id="CHEBI:74486"/>
        <dbReference type="EC" id="2.1.1.177"/>
    </reaction>
</comment>
<comment type="subunit">
    <text evidence="1">Homodimer.</text>
</comment>
<comment type="subcellular location">
    <subcellularLocation>
        <location evidence="1">Cytoplasm</location>
    </subcellularLocation>
</comment>
<comment type="similarity">
    <text evidence="1">Belongs to the RNA methyltransferase RlmH family.</text>
</comment>
<organism>
    <name type="scientific">Acidovorax ebreus (strain TPSY)</name>
    <name type="common">Diaphorobacter sp. (strain TPSY)</name>
    <dbReference type="NCBI Taxonomy" id="535289"/>
    <lineage>
        <taxon>Bacteria</taxon>
        <taxon>Pseudomonadati</taxon>
        <taxon>Pseudomonadota</taxon>
        <taxon>Betaproteobacteria</taxon>
        <taxon>Burkholderiales</taxon>
        <taxon>Comamonadaceae</taxon>
        <taxon>Diaphorobacter</taxon>
    </lineage>
</organism>
<accession>B9MJ26</accession>
<protein>
    <recommendedName>
        <fullName evidence="1">Ribosomal RNA large subunit methyltransferase H</fullName>
        <ecNumber evidence="1">2.1.1.177</ecNumber>
    </recommendedName>
    <alternativeName>
        <fullName evidence="1">23S rRNA (pseudouridine1915-N3)-methyltransferase</fullName>
    </alternativeName>
    <alternativeName>
        <fullName evidence="1">23S rRNA m3Psi1915 methyltransferase</fullName>
    </alternativeName>
    <alternativeName>
        <fullName evidence="1">rRNA (pseudouridine-N3-)-methyltransferase RlmH</fullName>
    </alternativeName>
</protein>
<gene>
    <name evidence="1" type="primary">rlmH</name>
    <name type="ordered locus">Dtpsy_1707</name>
</gene>
<proteinExistence type="inferred from homology"/>
<dbReference type="EC" id="2.1.1.177" evidence="1"/>
<dbReference type="EMBL" id="CP001392">
    <property type="protein sequence ID" value="ACM33164.1"/>
    <property type="molecule type" value="Genomic_DNA"/>
</dbReference>
<dbReference type="RefSeq" id="WP_015913251.1">
    <property type="nucleotide sequence ID" value="NC_011992.1"/>
</dbReference>
<dbReference type="SMR" id="B9MJ26"/>
<dbReference type="GeneID" id="84681607"/>
<dbReference type="KEGG" id="dia:Dtpsy_1707"/>
<dbReference type="eggNOG" id="COG1576">
    <property type="taxonomic scope" value="Bacteria"/>
</dbReference>
<dbReference type="HOGENOM" id="CLU_100552_1_0_4"/>
<dbReference type="Proteomes" id="UP000000450">
    <property type="component" value="Chromosome"/>
</dbReference>
<dbReference type="GO" id="GO:0005737">
    <property type="term" value="C:cytoplasm"/>
    <property type="evidence" value="ECO:0007669"/>
    <property type="project" value="UniProtKB-SubCell"/>
</dbReference>
<dbReference type="GO" id="GO:0070038">
    <property type="term" value="F:rRNA (pseudouridine-N3-)-methyltransferase activity"/>
    <property type="evidence" value="ECO:0007669"/>
    <property type="project" value="UniProtKB-UniRule"/>
</dbReference>
<dbReference type="CDD" id="cd18081">
    <property type="entry name" value="RlmH-like"/>
    <property type="match status" value="1"/>
</dbReference>
<dbReference type="Gene3D" id="3.40.1280.10">
    <property type="match status" value="1"/>
</dbReference>
<dbReference type="HAMAP" id="MF_00658">
    <property type="entry name" value="23SrRNA_methyltr_H"/>
    <property type="match status" value="1"/>
</dbReference>
<dbReference type="InterPro" id="IPR029028">
    <property type="entry name" value="Alpha/beta_knot_MTases"/>
</dbReference>
<dbReference type="InterPro" id="IPR003742">
    <property type="entry name" value="RlmH-like"/>
</dbReference>
<dbReference type="InterPro" id="IPR029026">
    <property type="entry name" value="tRNA_m1G_MTases_N"/>
</dbReference>
<dbReference type="NCBIfam" id="NF000986">
    <property type="entry name" value="PRK00103.1-4"/>
    <property type="match status" value="1"/>
</dbReference>
<dbReference type="PANTHER" id="PTHR33603">
    <property type="entry name" value="METHYLTRANSFERASE"/>
    <property type="match status" value="1"/>
</dbReference>
<dbReference type="PANTHER" id="PTHR33603:SF1">
    <property type="entry name" value="RIBOSOMAL RNA LARGE SUBUNIT METHYLTRANSFERASE H"/>
    <property type="match status" value="1"/>
</dbReference>
<dbReference type="Pfam" id="PF02590">
    <property type="entry name" value="SPOUT_MTase"/>
    <property type="match status" value="1"/>
</dbReference>
<dbReference type="PIRSF" id="PIRSF004505">
    <property type="entry name" value="MT_bac"/>
    <property type="match status" value="1"/>
</dbReference>
<dbReference type="SUPFAM" id="SSF75217">
    <property type="entry name" value="alpha/beta knot"/>
    <property type="match status" value="1"/>
</dbReference>
<evidence type="ECO:0000255" key="1">
    <source>
        <dbReference type="HAMAP-Rule" id="MF_00658"/>
    </source>
</evidence>
<sequence length="155" mass="17434">MKLLIVAVGQRVPDWAQTAYDDYAKRFPPELKVELKAVKTEPRGSKTLETLYAAERERIEAAIPRGTRVVVLDERGTSLTTKALAQRLKDWQLGGDDVALVIGGPDGLEPAFRQAAHERIRLSDLTLPHAMVRVLLIEQLYRAWSVNAGHPYHRE</sequence>
<reference key="1">
    <citation type="submission" date="2009-01" db="EMBL/GenBank/DDBJ databases">
        <title>Complete sequence of Diaphorobacter sp. TPSY.</title>
        <authorList>
            <consortium name="US DOE Joint Genome Institute"/>
            <person name="Lucas S."/>
            <person name="Copeland A."/>
            <person name="Lapidus A."/>
            <person name="Glavina del Rio T."/>
            <person name="Tice H."/>
            <person name="Bruce D."/>
            <person name="Goodwin L."/>
            <person name="Pitluck S."/>
            <person name="Chertkov O."/>
            <person name="Brettin T."/>
            <person name="Detter J.C."/>
            <person name="Han C."/>
            <person name="Larimer F."/>
            <person name="Land M."/>
            <person name="Hauser L."/>
            <person name="Kyrpides N."/>
            <person name="Mikhailova N."/>
            <person name="Coates J.D."/>
        </authorList>
    </citation>
    <scope>NUCLEOTIDE SEQUENCE [LARGE SCALE GENOMIC DNA]</scope>
    <source>
        <strain>TPSY</strain>
    </source>
</reference>
<name>RLMH_ACIET</name>